<protein>
    <recommendedName>
        <fullName evidence="1">Anthranilate phosphoribosyltransferase</fullName>
        <ecNumber evidence="1">2.4.2.18</ecNumber>
    </recommendedName>
</protein>
<proteinExistence type="inferred from homology"/>
<sequence length="345" mass="36422">MSIANIDALTRVIDHREIFHDEMLALMRRIMSGEMSPVMIAAFAIGLRVKKETIGEIAAAAQVMREFATPVAVPDKTNLVDLCGTGGDGVHTFNISTASMFVAAAAGARVAKHGGRSVSSSSGSADVLEALGAHINLTPEQVAISLERCGIGFMFAPNHHASMKHAAPVRKELGVRTIFNILGPLTNPALAPNQVMGVFHPDLVGIQVRVLQRLGSSHVLIVHGMNGMDEISLSGETMIGELKAGQISEYVVHPADFGLPVYDTRVLKVANKEESVTCIQRALANEDGPVRDIVLLNAGAALYAADVVTSITDGVRAAREAVASGQALAKLSQYVAVTQSFKTAV</sequence>
<organism>
    <name type="scientific">Leptothrix cholodnii (strain ATCC 51168 / LMG 8142 / SP-6)</name>
    <name type="common">Leptothrix discophora (strain SP-6)</name>
    <dbReference type="NCBI Taxonomy" id="395495"/>
    <lineage>
        <taxon>Bacteria</taxon>
        <taxon>Pseudomonadati</taxon>
        <taxon>Pseudomonadota</taxon>
        <taxon>Betaproteobacteria</taxon>
        <taxon>Burkholderiales</taxon>
        <taxon>Sphaerotilaceae</taxon>
        <taxon>Leptothrix</taxon>
    </lineage>
</organism>
<evidence type="ECO:0000255" key="1">
    <source>
        <dbReference type="HAMAP-Rule" id="MF_00211"/>
    </source>
</evidence>
<reference key="1">
    <citation type="submission" date="2008-03" db="EMBL/GenBank/DDBJ databases">
        <title>Complete sequence of Leptothrix cholodnii SP-6.</title>
        <authorList>
            <consortium name="US DOE Joint Genome Institute"/>
            <person name="Copeland A."/>
            <person name="Lucas S."/>
            <person name="Lapidus A."/>
            <person name="Glavina del Rio T."/>
            <person name="Dalin E."/>
            <person name="Tice H."/>
            <person name="Bruce D."/>
            <person name="Goodwin L."/>
            <person name="Pitluck S."/>
            <person name="Chertkov O."/>
            <person name="Brettin T."/>
            <person name="Detter J.C."/>
            <person name="Han C."/>
            <person name="Kuske C.R."/>
            <person name="Schmutz J."/>
            <person name="Larimer F."/>
            <person name="Land M."/>
            <person name="Hauser L."/>
            <person name="Kyrpides N."/>
            <person name="Lykidis A."/>
            <person name="Emerson D."/>
            <person name="Richardson P."/>
        </authorList>
    </citation>
    <scope>NUCLEOTIDE SEQUENCE [LARGE SCALE GENOMIC DNA]</scope>
    <source>
        <strain>ATCC 51168 / LMG 8142 / SP-6</strain>
    </source>
</reference>
<keyword id="KW-0028">Amino-acid biosynthesis</keyword>
<keyword id="KW-0057">Aromatic amino acid biosynthesis</keyword>
<keyword id="KW-0328">Glycosyltransferase</keyword>
<keyword id="KW-0460">Magnesium</keyword>
<keyword id="KW-0479">Metal-binding</keyword>
<keyword id="KW-1185">Reference proteome</keyword>
<keyword id="KW-0808">Transferase</keyword>
<keyword id="KW-0822">Tryptophan biosynthesis</keyword>
<name>TRPD_LEPCP</name>
<comment type="function">
    <text evidence="1">Catalyzes the transfer of the phosphoribosyl group of 5-phosphorylribose-1-pyrophosphate (PRPP) to anthranilate to yield N-(5'-phosphoribosyl)-anthranilate (PRA).</text>
</comment>
<comment type="catalytic activity">
    <reaction evidence="1">
        <text>N-(5-phospho-beta-D-ribosyl)anthranilate + diphosphate = 5-phospho-alpha-D-ribose 1-diphosphate + anthranilate</text>
        <dbReference type="Rhea" id="RHEA:11768"/>
        <dbReference type="ChEBI" id="CHEBI:16567"/>
        <dbReference type="ChEBI" id="CHEBI:18277"/>
        <dbReference type="ChEBI" id="CHEBI:33019"/>
        <dbReference type="ChEBI" id="CHEBI:58017"/>
        <dbReference type="EC" id="2.4.2.18"/>
    </reaction>
</comment>
<comment type="cofactor">
    <cofactor evidence="1">
        <name>Mg(2+)</name>
        <dbReference type="ChEBI" id="CHEBI:18420"/>
    </cofactor>
    <text evidence="1">Binds 2 magnesium ions per monomer.</text>
</comment>
<comment type="pathway">
    <text evidence="1">Amino-acid biosynthesis; L-tryptophan biosynthesis; L-tryptophan from chorismate: step 2/5.</text>
</comment>
<comment type="subunit">
    <text evidence="1">Homodimer.</text>
</comment>
<comment type="similarity">
    <text evidence="1">Belongs to the anthranilate phosphoribosyltransferase family.</text>
</comment>
<dbReference type="EC" id="2.4.2.18" evidence="1"/>
<dbReference type="EMBL" id="CP001013">
    <property type="protein sequence ID" value="ACB36131.1"/>
    <property type="molecule type" value="Genomic_DNA"/>
</dbReference>
<dbReference type="RefSeq" id="WP_012348877.1">
    <property type="nucleotide sequence ID" value="NC_010524.1"/>
</dbReference>
<dbReference type="SMR" id="B1Y7I3"/>
<dbReference type="STRING" id="395495.Lcho_3877"/>
<dbReference type="KEGG" id="lch:Lcho_3877"/>
<dbReference type="eggNOG" id="COG0547">
    <property type="taxonomic scope" value="Bacteria"/>
</dbReference>
<dbReference type="HOGENOM" id="CLU_034315_2_1_4"/>
<dbReference type="OrthoDB" id="9806430at2"/>
<dbReference type="UniPathway" id="UPA00035">
    <property type="reaction ID" value="UER00041"/>
</dbReference>
<dbReference type="Proteomes" id="UP000001693">
    <property type="component" value="Chromosome"/>
</dbReference>
<dbReference type="GO" id="GO:0005829">
    <property type="term" value="C:cytosol"/>
    <property type="evidence" value="ECO:0007669"/>
    <property type="project" value="TreeGrafter"/>
</dbReference>
<dbReference type="GO" id="GO:0004048">
    <property type="term" value="F:anthranilate phosphoribosyltransferase activity"/>
    <property type="evidence" value="ECO:0007669"/>
    <property type="project" value="UniProtKB-UniRule"/>
</dbReference>
<dbReference type="GO" id="GO:0000287">
    <property type="term" value="F:magnesium ion binding"/>
    <property type="evidence" value="ECO:0007669"/>
    <property type="project" value="UniProtKB-UniRule"/>
</dbReference>
<dbReference type="GO" id="GO:0000162">
    <property type="term" value="P:L-tryptophan biosynthetic process"/>
    <property type="evidence" value="ECO:0007669"/>
    <property type="project" value="UniProtKB-UniRule"/>
</dbReference>
<dbReference type="FunFam" id="1.20.970.10:FF:000006">
    <property type="entry name" value="Anthranilate phosphoribosyltransferase"/>
    <property type="match status" value="1"/>
</dbReference>
<dbReference type="FunFam" id="3.40.1030.10:FF:000002">
    <property type="entry name" value="Anthranilate phosphoribosyltransferase"/>
    <property type="match status" value="1"/>
</dbReference>
<dbReference type="Gene3D" id="3.40.1030.10">
    <property type="entry name" value="Nucleoside phosphorylase/phosphoribosyltransferase catalytic domain"/>
    <property type="match status" value="1"/>
</dbReference>
<dbReference type="Gene3D" id="1.20.970.10">
    <property type="entry name" value="Transferase, Pyrimidine Nucleoside Phosphorylase, Chain C"/>
    <property type="match status" value="1"/>
</dbReference>
<dbReference type="HAMAP" id="MF_00211">
    <property type="entry name" value="TrpD"/>
    <property type="match status" value="1"/>
</dbReference>
<dbReference type="InterPro" id="IPR005940">
    <property type="entry name" value="Anthranilate_Pribosyl_Tfrase"/>
</dbReference>
<dbReference type="InterPro" id="IPR000312">
    <property type="entry name" value="Glycosyl_Trfase_fam3"/>
</dbReference>
<dbReference type="InterPro" id="IPR017459">
    <property type="entry name" value="Glycosyl_Trfase_fam3_N_dom"/>
</dbReference>
<dbReference type="InterPro" id="IPR036320">
    <property type="entry name" value="Glycosyl_Trfase_fam3_N_dom_sf"/>
</dbReference>
<dbReference type="InterPro" id="IPR035902">
    <property type="entry name" value="Nuc_phospho_transferase"/>
</dbReference>
<dbReference type="NCBIfam" id="TIGR01245">
    <property type="entry name" value="trpD"/>
    <property type="match status" value="1"/>
</dbReference>
<dbReference type="PANTHER" id="PTHR43285">
    <property type="entry name" value="ANTHRANILATE PHOSPHORIBOSYLTRANSFERASE"/>
    <property type="match status" value="1"/>
</dbReference>
<dbReference type="PANTHER" id="PTHR43285:SF2">
    <property type="entry name" value="ANTHRANILATE PHOSPHORIBOSYLTRANSFERASE"/>
    <property type="match status" value="1"/>
</dbReference>
<dbReference type="Pfam" id="PF02885">
    <property type="entry name" value="Glycos_trans_3N"/>
    <property type="match status" value="1"/>
</dbReference>
<dbReference type="Pfam" id="PF00591">
    <property type="entry name" value="Glycos_transf_3"/>
    <property type="match status" value="1"/>
</dbReference>
<dbReference type="SUPFAM" id="SSF52418">
    <property type="entry name" value="Nucleoside phosphorylase/phosphoribosyltransferase catalytic domain"/>
    <property type="match status" value="1"/>
</dbReference>
<dbReference type="SUPFAM" id="SSF47648">
    <property type="entry name" value="Nucleoside phosphorylase/phosphoribosyltransferase N-terminal domain"/>
    <property type="match status" value="1"/>
</dbReference>
<gene>
    <name evidence="1" type="primary">trpD</name>
    <name type="ordered locus">Lcho_3877</name>
</gene>
<accession>B1Y7I3</accession>
<feature type="chain" id="PRO_1000198827" description="Anthranilate phosphoribosyltransferase">
    <location>
        <begin position="1"/>
        <end position="345"/>
    </location>
</feature>
<feature type="binding site" evidence="1">
    <location>
        <position position="84"/>
    </location>
    <ligand>
        <name>5-phospho-alpha-D-ribose 1-diphosphate</name>
        <dbReference type="ChEBI" id="CHEBI:58017"/>
    </ligand>
</feature>
<feature type="binding site" evidence="1">
    <location>
        <position position="84"/>
    </location>
    <ligand>
        <name>anthranilate</name>
        <dbReference type="ChEBI" id="CHEBI:16567"/>
        <label>1</label>
    </ligand>
</feature>
<feature type="binding site" evidence="1">
    <location>
        <begin position="87"/>
        <end position="88"/>
    </location>
    <ligand>
        <name>5-phospho-alpha-D-ribose 1-diphosphate</name>
        <dbReference type="ChEBI" id="CHEBI:58017"/>
    </ligand>
</feature>
<feature type="binding site" evidence="1">
    <location>
        <position position="92"/>
    </location>
    <ligand>
        <name>5-phospho-alpha-D-ribose 1-diphosphate</name>
        <dbReference type="ChEBI" id="CHEBI:58017"/>
    </ligand>
</feature>
<feature type="binding site" evidence="1">
    <location>
        <begin position="94"/>
        <end position="97"/>
    </location>
    <ligand>
        <name>5-phospho-alpha-D-ribose 1-diphosphate</name>
        <dbReference type="ChEBI" id="CHEBI:58017"/>
    </ligand>
</feature>
<feature type="binding site" evidence="1">
    <location>
        <position position="96"/>
    </location>
    <ligand>
        <name>Mg(2+)</name>
        <dbReference type="ChEBI" id="CHEBI:18420"/>
        <label>1</label>
    </ligand>
</feature>
<feature type="binding site" evidence="1">
    <location>
        <begin position="112"/>
        <end position="120"/>
    </location>
    <ligand>
        <name>5-phospho-alpha-D-ribose 1-diphosphate</name>
        <dbReference type="ChEBI" id="CHEBI:58017"/>
    </ligand>
</feature>
<feature type="binding site" evidence="1">
    <location>
        <position position="124"/>
    </location>
    <ligand>
        <name>5-phospho-alpha-D-ribose 1-diphosphate</name>
        <dbReference type="ChEBI" id="CHEBI:58017"/>
    </ligand>
</feature>
<feature type="binding site" evidence="1">
    <location>
        <position position="170"/>
    </location>
    <ligand>
        <name>anthranilate</name>
        <dbReference type="ChEBI" id="CHEBI:16567"/>
        <label>2</label>
    </ligand>
</feature>
<feature type="binding site" evidence="1">
    <location>
        <position position="229"/>
    </location>
    <ligand>
        <name>Mg(2+)</name>
        <dbReference type="ChEBI" id="CHEBI:18420"/>
        <label>2</label>
    </ligand>
</feature>
<feature type="binding site" evidence="1">
    <location>
        <position position="230"/>
    </location>
    <ligand>
        <name>Mg(2+)</name>
        <dbReference type="ChEBI" id="CHEBI:18420"/>
        <label>1</label>
    </ligand>
</feature>
<feature type="binding site" evidence="1">
    <location>
        <position position="230"/>
    </location>
    <ligand>
        <name>Mg(2+)</name>
        <dbReference type="ChEBI" id="CHEBI:18420"/>
        <label>2</label>
    </ligand>
</feature>